<name>YEAL_ECOHS</name>
<comment type="subcellular location">
    <subcellularLocation>
        <location evidence="1">Cell membrane</location>
        <topology evidence="1">Multi-pass membrane protein</topology>
    </subcellularLocation>
</comment>
<comment type="similarity">
    <text evidence="1">Belongs to the UPF0756 family.</text>
</comment>
<evidence type="ECO:0000255" key="1">
    <source>
        <dbReference type="HAMAP-Rule" id="MF_01874"/>
    </source>
</evidence>
<keyword id="KW-1003">Cell membrane</keyword>
<keyword id="KW-0472">Membrane</keyword>
<keyword id="KW-0812">Transmembrane</keyword>
<keyword id="KW-1133">Transmembrane helix</keyword>
<gene>
    <name evidence="1" type="primary">yeaL</name>
    <name type="ordered locus">EcHS_A1875</name>
</gene>
<accession>A8A0Y2</accession>
<dbReference type="EMBL" id="CP000802">
    <property type="protein sequence ID" value="ABV06186.1"/>
    <property type="molecule type" value="Genomic_DNA"/>
</dbReference>
<dbReference type="RefSeq" id="WP_000460707.1">
    <property type="nucleotide sequence ID" value="NC_009800.1"/>
</dbReference>
<dbReference type="KEGG" id="ecx:EcHS_A1875"/>
<dbReference type="HOGENOM" id="CLU_125889_0_0_6"/>
<dbReference type="GO" id="GO:0005886">
    <property type="term" value="C:plasma membrane"/>
    <property type="evidence" value="ECO:0007669"/>
    <property type="project" value="UniProtKB-SubCell"/>
</dbReference>
<dbReference type="HAMAP" id="MF_01874">
    <property type="entry name" value="UPF0756"/>
    <property type="match status" value="1"/>
</dbReference>
<dbReference type="InterPro" id="IPR007382">
    <property type="entry name" value="UPF0756_TM"/>
</dbReference>
<dbReference type="PANTHER" id="PTHR38452">
    <property type="entry name" value="UPF0756 MEMBRANE PROTEIN YEAL"/>
    <property type="match status" value="1"/>
</dbReference>
<dbReference type="PANTHER" id="PTHR38452:SF1">
    <property type="entry name" value="UPF0756 MEMBRANE PROTEIN YEAL"/>
    <property type="match status" value="1"/>
</dbReference>
<dbReference type="Pfam" id="PF04284">
    <property type="entry name" value="DUF441"/>
    <property type="match status" value="1"/>
</dbReference>
<feature type="chain" id="PRO_0000388873" description="UPF0756 membrane protein YeaL">
    <location>
        <begin position="1"/>
        <end position="148"/>
    </location>
</feature>
<feature type="transmembrane region" description="Helical" evidence="1">
    <location>
        <begin position="14"/>
        <end position="34"/>
    </location>
</feature>
<feature type="transmembrane region" description="Helical" evidence="1">
    <location>
        <begin position="51"/>
        <end position="71"/>
    </location>
</feature>
<feature type="transmembrane region" description="Helical" evidence="1">
    <location>
        <begin position="86"/>
        <end position="106"/>
    </location>
</feature>
<feature type="transmembrane region" description="Helical" evidence="1">
    <location>
        <begin position="121"/>
        <end position="141"/>
    </location>
</feature>
<protein>
    <recommendedName>
        <fullName evidence="1">UPF0756 membrane protein YeaL</fullName>
    </recommendedName>
</protein>
<organism>
    <name type="scientific">Escherichia coli O9:H4 (strain HS)</name>
    <dbReference type="NCBI Taxonomy" id="331112"/>
    <lineage>
        <taxon>Bacteria</taxon>
        <taxon>Pseudomonadati</taxon>
        <taxon>Pseudomonadota</taxon>
        <taxon>Gammaproteobacteria</taxon>
        <taxon>Enterobacterales</taxon>
        <taxon>Enterobacteriaceae</taxon>
        <taxon>Escherichia</taxon>
    </lineage>
</organism>
<sequence>MFDVTLLILLGLAALGFISHNTTVAVSILVLIIVRVTPLSTFFPWIEKQGLSIGIIILTIGVMAPIASGTLPPSTLIHSFLNWKSLVAIAVGVIVSWLGGRGVTLMGSQPQLVAGLLVGTVLGVALFRGVPVGPLIAAGLVSLIVGKQ</sequence>
<reference key="1">
    <citation type="journal article" date="2008" name="J. Bacteriol.">
        <title>The pangenome structure of Escherichia coli: comparative genomic analysis of E. coli commensal and pathogenic isolates.</title>
        <authorList>
            <person name="Rasko D.A."/>
            <person name="Rosovitz M.J."/>
            <person name="Myers G.S.A."/>
            <person name="Mongodin E.F."/>
            <person name="Fricke W.F."/>
            <person name="Gajer P."/>
            <person name="Crabtree J."/>
            <person name="Sebaihia M."/>
            <person name="Thomson N.R."/>
            <person name="Chaudhuri R."/>
            <person name="Henderson I.R."/>
            <person name="Sperandio V."/>
            <person name="Ravel J."/>
        </authorList>
    </citation>
    <scope>NUCLEOTIDE SEQUENCE [LARGE SCALE GENOMIC DNA]</scope>
    <source>
        <strain>HS</strain>
    </source>
</reference>
<proteinExistence type="inferred from homology"/>